<reference key="1">
    <citation type="journal article" date="2015" name="Genome Announc.">
        <title>Genome sequence of the AIDS-associated pathogen Penicillium marneffei (ATCC18224) and its near taxonomic relative Talaromyces stipitatus (ATCC10500).</title>
        <authorList>
            <person name="Nierman W.C."/>
            <person name="Fedorova-Abrams N.D."/>
            <person name="Andrianopoulos A."/>
        </authorList>
    </citation>
    <scope>NUCLEOTIDE SEQUENCE [LARGE SCALE GENOMIC DNA]</scope>
    <source>
        <strain>ATCC 18224 / CBS 334.59 / QM 7333</strain>
    </source>
</reference>
<proteinExistence type="inferred from homology"/>
<organism>
    <name type="scientific">Talaromyces marneffei (strain ATCC 18224 / CBS 334.59 / QM 7333)</name>
    <name type="common">Penicillium marneffei</name>
    <dbReference type="NCBI Taxonomy" id="441960"/>
    <lineage>
        <taxon>Eukaryota</taxon>
        <taxon>Fungi</taxon>
        <taxon>Dikarya</taxon>
        <taxon>Ascomycota</taxon>
        <taxon>Pezizomycotina</taxon>
        <taxon>Eurotiomycetes</taxon>
        <taxon>Eurotiomycetidae</taxon>
        <taxon>Eurotiales</taxon>
        <taxon>Trichocomaceae</taxon>
        <taxon>Talaromyces</taxon>
        <taxon>Talaromyces sect. Talaromyces</taxon>
    </lineage>
</organism>
<protein>
    <recommendedName>
        <fullName evidence="1">Mitochondrial distribution and morphology protein 34</fullName>
    </recommendedName>
</protein>
<evidence type="ECO:0000255" key="1">
    <source>
        <dbReference type="HAMAP-Rule" id="MF_03105"/>
    </source>
</evidence>
<evidence type="ECO:0000256" key="2">
    <source>
        <dbReference type="SAM" id="MobiDB-lite"/>
    </source>
</evidence>
<accession>B6QIB3</accession>
<sequence length="565" mass="62286">MAFNFNWSPLMADAGFYTRAQDLLTAALNKSPKPPIIVDDIKVTELNLGSIPPDLEILEVGDLAEDRFRGIFKMSYNGDAFLTLKTRVQANPLNTFLVTRPSFASPKPLAAASGLTIPLQITLSEFRLSGFVVLVFSKQKGITVVFRNDPLESLKVSSTFDSISFVRDYLQKAIEGQLRALFMDELPAIIHRLSLRLWVPEYRDRESESVNTLDLSSESGPGQDPLASPPQDPVDASGNALNPSEVASLSLDSGVEIHNLFSHKNLLRLAALTDSQRTLSLFTPSIKDVVYRAWTASAELGESNTLTSPTSPVLSRTHSHIGSLHSFVDNASTISMQSGGSSNFSGFGSYLRPGRHSRSHTKKRKKRVVDLRRPKTTDDVDSVSGDSVFSSENATSAPTIFSSPAHFSEEKNDDPVTPPLGPQNDLHLPTIHERRRISQGDQTLRRSNLSMSEAAQPSSSRSAQMIAETWPDPDATPRNTIRLPSNDRASNRFTAVSLPSSAIQYTPTVPINNNNPREQVWLSKMAAELARRMQEQKIDPSGSRPFPDFWDDHSREEIPPPAYGH</sequence>
<feature type="chain" id="PRO_0000384356" description="Mitochondrial distribution and morphology protein 34">
    <location>
        <begin position="1"/>
        <end position="565"/>
    </location>
</feature>
<feature type="domain" description="SMP-LTD" evidence="1">
    <location>
        <begin position="1"/>
        <end position="208"/>
    </location>
</feature>
<feature type="region of interest" description="Disordered" evidence="2">
    <location>
        <begin position="209"/>
        <end position="241"/>
    </location>
</feature>
<feature type="region of interest" description="Disordered" evidence="2">
    <location>
        <begin position="347"/>
        <end position="463"/>
    </location>
</feature>
<feature type="region of interest" description="Disordered" evidence="2">
    <location>
        <begin position="533"/>
        <end position="565"/>
    </location>
</feature>
<feature type="compositionally biased region" description="Polar residues" evidence="2">
    <location>
        <begin position="209"/>
        <end position="220"/>
    </location>
</feature>
<feature type="compositionally biased region" description="Basic residues" evidence="2">
    <location>
        <begin position="353"/>
        <end position="367"/>
    </location>
</feature>
<feature type="compositionally biased region" description="Basic and acidic residues" evidence="2">
    <location>
        <begin position="368"/>
        <end position="378"/>
    </location>
</feature>
<feature type="compositionally biased region" description="Low complexity" evidence="2">
    <location>
        <begin position="382"/>
        <end position="391"/>
    </location>
</feature>
<feature type="compositionally biased region" description="Polar residues" evidence="2">
    <location>
        <begin position="392"/>
        <end position="402"/>
    </location>
</feature>
<feature type="compositionally biased region" description="Polar residues" evidence="2">
    <location>
        <begin position="439"/>
        <end position="463"/>
    </location>
</feature>
<comment type="function">
    <text evidence="1">Component of the ERMES/MDM complex, which serves as a molecular tether to connect the endoplasmic reticulum (ER) and mitochondria. Components of this complex are involved in the control of mitochondrial shape and protein biogenesis, and function in nonvesicular lipid trafficking between the ER and mitochondria. Mdm34 is required for the interaction of the ER-resident membrane protein mmm1 and the outer mitochondrial membrane-resident beta-barrel protein mdm10.</text>
</comment>
<comment type="subunit">
    <text evidence="1">Component of the ER-mitochondria encounter structure (ERMES) or MDM complex, composed of mmm1, mdm10, mdm12 and mdm34.</text>
</comment>
<comment type="subcellular location">
    <subcellularLocation>
        <location evidence="1">Mitochondrion outer membrane</location>
        <topology evidence="1">Multi-pass membrane protein</topology>
    </subcellularLocation>
    <text evidence="1">The ERMES/MDM complex localizes to a few discrete foci (around 10 per single cell), that represent mitochondria-endoplasmic reticulum junctions. These foci are often found next to mtDNA nucleoids.</text>
</comment>
<comment type="domain">
    <text evidence="1">Lacks alpha-helical transmembrane segments, suggesting that it resides in the membrane via beta-sheet conformations similar to those predicted for other outer membrane proteins and porin.</text>
</comment>
<comment type="domain">
    <text evidence="1">The SMP-LTD domain is a barrel-like domain that can bind various types of glycerophospholipids in its interior and mediate their transfer between two adjacent bilayers.</text>
</comment>
<comment type="similarity">
    <text evidence="1">Belongs to the MDM34 family.</text>
</comment>
<gene>
    <name evidence="1" type="primary">mdm34</name>
    <name type="ORF">PMAA_097010</name>
</gene>
<name>MDM34_TALMQ</name>
<dbReference type="EMBL" id="DS995902">
    <property type="protein sequence ID" value="EEA23108.1"/>
    <property type="molecule type" value="Genomic_DNA"/>
</dbReference>
<dbReference type="RefSeq" id="XP_002149275.1">
    <property type="nucleotide sequence ID" value="XM_002149239.1"/>
</dbReference>
<dbReference type="SMR" id="B6QIB3"/>
<dbReference type="STRING" id="441960.B6QIB3"/>
<dbReference type="VEuPathDB" id="FungiDB:PMAA_097010"/>
<dbReference type="HOGENOM" id="CLU_036502_1_0_1"/>
<dbReference type="OrthoDB" id="5657at28568"/>
<dbReference type="PhylomeDB" id="B6QIB3"/>
<dbReference type="Proteomes" id="UP000001294">
    <property type="component" value="Unassembled WGS sequence"/>
</dbReference>
<dbReference type="GO" id="GO:0032865">
    <property type="term" value="C:ERMES complex"/>
    <property type="evidence" value="ECO:0007669"/>
    <property type="project" value="UniProtKB-UniRule"/>
</dbReference>
<dbReference type="GO" id="GO:0008289">
    <property type="term" value="F:lipid binding"/>
    <property type="evidence" value="ECO:0007669"/>
    <property type="project" value="UniProtKB-KW"/>
</dbReference>
<dbReference type="GO" id="GO:0000002">
    <property type="term" value="P:mitochondrial genome maintenance"/>
    <property type="evidence" value="ECO:0007669"/>
    <property type="project" value="UniProtKB-UniRule"/>
</dbReference>
<dbReference type="GO" id="GO:1990456">
    <property type="term" value="P:mitochondrion-endoplasmic reticulum membrane tethering"/>
    <property type="evidence" value="ECO:0007669"/>
    <property type="project" value="TreeGrafter"/>
</dbReference>
<dbReference type="GO" id="GO:0015914">
    <property type="term" value="P:phospholipid transport"/>
    <property type="evidence" value="ECO:0007669"/>
    <property type="project" value="TreeGrafter"/>
</dbReference>
<dbReference type="CDD" id="cd21673">
    <property type="entry name" value="SMP_Mdm34"/>
    <property type="match status" value="1"/>
</dbReference>
<dbReference type="HAMAP" id="MF_03105">
    <property type="entry name" value="Mdm34"/>
    <property type="match status" value="1"/>
</dbReference>
<dbReference type="InterPro" id="IPR027536">
    <property type="entry name" value="Mdm34"/>
</dbReference>
<dbReference type="InterPro" id="IPR031468">
    <property type="entry name" value="SMP_LBD"/>
</dbReference>
<dbReference type="PANTHER" id="PTHR28185">
    <property type="entry name" value="MITOCHONDRIAL DISTRIBUTION AND MORPHOLOGY PROTEIN 34"/>
    <property type="match status" value="1"/>
</dbReference>
<dbReference type="PANTHER" id="PTHR28185:SF1">
    <property type="entry name" value="MITOCHONDRIAL DISTRIBUTION AND MORPHOLOGY PROTEIN 34"/>
    <property type="match status" value="1"/>
</dbReference>
<dbReference type="PROSITE" id="PS51847">
    <property type="entry name" value="SMP"/>
    <property type="match status" value="1"/>
</dbReference>
<keyword id="KW-0445">Lipid transport</keyword>
<keyword id="KW-0446">Lipid-binding</keyword>
<keyword id="KW-0472">Membrane</keyword>
<keyword id="KW-0496">Mitochondrion</keyword>
<keyword id="KW-1000">Mitochondrion outer membrane</keyword>
<keyword id="KW-1185">Reference proteome</keyword>
<keyword id="KW-0812">Transmembrane</keyword>
<keyword id="KW-1134">Transmembrane beta strand</keyword>
<keyword id="KW-0813">Transport</keyword>